<feature type="chain" id="PRO_1000079542" description="Large ribosomal subunit protein uL10">
    <location>
        <begin position="1"/>
        <end position="165"/>
    </location>
</feature>
<feature type="modified residue" description="N6-acetyllysine" evidence="1">
    <location>
        <position position="37"/>
    </location>
</feature>
<feature type="modified residue" description="N6-acetyllysine" evidence="1">
    <location>
        <position position="105"/>
    </location>
</feature>
<gene>
    <name evidence="1" type="primary">rplJ</name>
    <name type="ordered locus">EcolC_4040</name>
</gene>
<organism>
    <name type="scientific">Escherichia coli (strain ATCC 8739 / DSM 1576 / NBRC 3972 / NCIMB 8545 / WDCM 00012 / Crooks)</name>
    <dbReference type="NCBI Taxonomy" id="481805"/>
    <lineage>
        <taxon>Bacteria</taxon>
        <taxon>Pseudomonadati</taxon>
        <taxon>Pseudomonadota</taxon>
        <taxon>Gammaproteobacteria</taxon>
        <taxon>Enterobacterales</taxon>
        <taxon>Enterobacteriaceae</taxon>
        <taxon>Escherichia</taxon>
    </lineage>
</organism>
<comment type="function">
    <text evidence="1">Forms part of the ribosomal stalk, playing a central role in the interaction of the ribosome with GTP-bound translation factors.</text>
</comment>
<comment type="subunit">
    <text evidence="1">Part of the ribosomal stalk of the 50S ribosomal subunit. The N-terminus interacts with L11 and the large rRNA to form the base of the stalk. The C-terminus forms an elongated spine to which L12 dimers bind in a sequential fashion forming a multimeric L10(L12)X complex.</text>
</comment>
<comment type="similarity">
    <text evidence="1">Belongs to the universal ribosomal protein uL10 family.</text>
</comment>
<dbReference type="EMBL" id="CP000946">
    <property type="protein sequence ID" value="ACA79639.1"/>
    <property type="molecule type" value="Genomic_DNA"/>
</dbReference>
<dbReference type="RefSeq" id="WP_001207201.1">
    <property type="nucleotide sequence ID" value="NZ_MTFT01000025.1"/>
</dbReference>
<dbReference type="SMR" id="B1IUR2"/>
<dbReference type="GeneID" id="93777909"/>
<dbReference type="KEGG" id="ecl:EcolC_4040"/>
<dbReference type="HOGENOM" id="CLU_092227_0_2_6"/>
<dbReference type="GO" id="GO:0015934">
    <property type="term" value="C:large ribosomal subunit"/>
    <property type="evidence" value="ECO:0007669"/>
    <property type="project" value="InterPro"/>
</dbReference>
<dbReference type="GO" id="GO:0070180">
    <property type="term" value="F:large ribosomal subunit rRNA binding"/>
    <property type="evidence" value="ECO:0007669"/>
    <property type="project" value="UniProtKB-UniRule"/>
</dbReference>
<dbReference type="GO" id="GO:0003735">
    <property type="term" value="F:structural constituent of ribosome"/>
    <property type="evidence" value="ECO:0007669"/>
    <property type="project" value="InterPro"/>
</dbReference>
<dbReference type="GO" id="GO:0006412">
    <property type="term" value="P:translation"/>
    <property type="evidence" value="ECO:0007669"/>
    <property type="project" value="UniProtKB-UniRule"/>
</dbReference>
<dbReference type="CDD" id="cd05797">
    <property type="entry name" value="Ribosomal_L10"/>
    <property type="match status" value="1"/>
</dbReference>
<dbReference type="FunFam" id="3.30.70.1730:FF:000001">
    <property type="entry name" value="50S ribosomal protein L10"/>
    <property type="match status" value="1"/>
</dbReference>
<dbReference type="Gene3D" id="3.30.70.1730">
    <property type="match status" value="1"/>
</dbReference>
<dbReference type="Gene3D" id="6.10.250.2350">
    <property type="match status" value="1"/>
</dbReference>
<dbReference type="HAMAP" id="MF_00362">
    <property type="entry name" value="Ribosomal_uL10"/>
    <property type="match status" value="1"/>
</dbReference>
<dbReference type="InterPro" id="IPR001790">
    <property type="entry name" value="Ribosomal_uL10"/>
</dbReference>
<dbReference type="InterPro" id="IPR043141">
    <property type="entry name" value="Ribosomal_uL10-like_sf"/>
</dbReference>
<dbReference type="InterPro" id="IPR022973">
    <property type="entry name" value="Ribosomal_uL10_bac"/>
</dbReference>
<dbReference type="InterPro" id="IPR047865">
    <property type="entry name" value="Ribosomal_uL10_bac_type"/>
</dbReference>
<dbReference type="InterPro" id="IPR002363">
    <property type="entry name" value="Ribosomal_uL10_CS_bac"/>
</dbReference>
<dbReference type="NCBIfam" id="NF000955">
    <property type="entry name" value="PRK00099.1-1"/>
    <property type="match status" value="1"/>
</dbReference>
<dbReference type="PANTHER" id="PTHR11560">
    <property type="entry name" value="39S RIBOSOMAL PROTEIN L10, MITOCHONDRIAL"/>
    <property type="match status" value="1"/>
</dbReference>
<dbReference type="Pfam" id="PF00466">
    <property type="entry name" value="Ribosomal_L10"/>
    <property type="match status" value="1"/>
</dbReference>
<dbReference type="SUPFAM" id="SSF160369">
    <property type="entry name" value="Ribosomal protein L10-like"/>
    <property type="match status" value="1"/>
</dbReference>
<dbReference type="PROSITE" id="PS01109">
    <property type="entry name" value="RIBOSOMAL_L10"/>
    <property type="match status" value="1"/>
</dbReference>
<sequence>MALNLQDKQAIVAEVSEVAKGALSAVVADSRGVTVDKMTELRKAGREAGVYMRVVRNTLLRRAVEGTPFECLKDAFVGPTLIAYSMEHPGAAARLFKEFAKANAKFEVKAAAFEGELIPASQIDRLATLPTYEEAIARLMATMKEASAGKLVRTLAAVRDAKEAA</sequence>
<name>RL10_ECOLC</name>
<accession>B1IUR2</accession>
<evidence type="ECO:0000255" key="1">
    <source>
        <dbReference type="HAMAP-Rule" id="MF_00362"/>
    </source>
</evidence>
<evidence type="ECO:0000305" key="2"/>
<proteinExistence type="inferred from homology"/>
<reference key="1">
    <citation type="submission" date="2008-02" db="EMBL/GenBank/DDBJ databases">
        <title>Complete sequence of Escherichia coli C str. ATCC 8739.</title>
        <authorList>
            <person name="Copeland A."/>
            <person name="Lucas S."/>
            <person name="Lapidus A."/>
            <person name="Glavina del Rio T."/>
            <person name="Dalin E."/>
            <person name="Tice H."/>
            <person name="Bruce D."/>
            <person name="Goodwin L."/>
            <person name="Pitluck S."/>
            <person name="Kiss H."/>
            <person name="Brettin T."/>
            <person name="Detter J.C."/>
            <person name="Han C."/>
            <person name="Kuske C.R."/>
            <person name="Schmutz J."/>
            <person name="Larimer F."/>
            <person name="Land M."/>
            <person name="Hauser L."/>
            <person name="Kyrpides N."/>
            <person name="Mikhailova N."/>
            <person name="Ingram L."/>
            <person name="Richardson P."/>
        </authorList>
    </citation>
    <scope>NUCLEOTIDE SEQUENCE [LARGE SCALE GENOMIC DNA]</scope>
    <source>
        <strain>ATCC 8739 / DSM 1576 / NBRC 3972 / NCIMB 8545 / WDCM 00012 / Crooks</strain>
    </source>
</reference>
<keyword id="KW-0007">Acetylation</keyword>
<keyword id="KW-0687">Ribonucleoprotein</keyword>
<keyword id="KW-0689">Ribosomal protein</keyword>
<keyword id="KW-0694">RNA-binding</keyword>
<keyword id="KW-0699">rRNA-binding</keyword>
<protein>
    <recommendedName>
        <fullName evidence="1">Large ribosomal subunit protein uL10</fullName>
    </recommendedName>
    <alternativeName>
        <fullName evidence="2">50S ribosomal protein L10</fullName>
    </alternativeName>
</protein>